<protein>
    <recommendedName>
        <fullName evidence="1">DNA gyrase subunit A</fullName>
        <ecNumber evidence="1">5.6.2.2</ecNumber>
    </recommendedName>
</protein>
<keyword id="KW-0067">ATP-binding</keyword>
<keyword id="KW-0963">Cytoplasm</keyword>
<keyword id="KW-0238">DNA-binding</keyword>
<keyword id="KW-0413">Isomerase</keyword>
<keyword id="KW-0547">Nucleotide-binding</keyword>
<keyword id="KW-0799">Topoisomerase</keyword>
<reference key="1">
    <citation type="journal article" date="1995" name="Microbiology">
        <title>Mycobacterium smegmatis DNA gyrase: cloning and overexpression in Escherichia coli.</title>
        <authorList>
            <person name="Madhusudan K."/>
            <person name="Nagaraja V."/>
        </authorList>
    </citation>
    <scope>NUCLEOTIDE SEQUENCE [GENOMIC DNA]</scope>
    <scope>FUNCTION</scope>
    <scope>ACTIVITY REGULATION</scope>
    <scope>SUBUNIT</scope>
    <source>
        <strain>ATCC 27204 / DSM 43464 / SN2</strain>
    </source>
</reference>
<reference key="2">
    <citation type="journal article" date="2002" name="Nucleic Acids Res.">
        <title>Functional characterisation of mycobacterial DNA gyrase: an efficient decatenase.</title>
        <authorList>
            <person name="Manjunatha U.H."/>
            <person name="Dalal M."/>
            <person name="Chatterji M."/>
            <person name="Radha D.R."/>
            <person name="Visweswariah S.S."/>
            <person name="Nagaraja V."/>
        </authorList>
    </citation>
    <scope>FUNCTION</scope>
    <scope>CATALYTIC ACTIVITY</scope>
    <scope>ACTIVITY REGULATION</scope>
    <scope>SUBUNIT</scope>
    <scope>SUBCELLULAR LOCATION</scope>
    <scope>DNA-BINDING</scope>
    <source>
        <strain>ATCC 27204 / DSM 43464 / SN2</strain>
    </source>
</reference>
<dbReference type="EC" id="5.6.2.2" evidence="1"/>
<dbReference type="EMBL" id="X84077">
    <property type="protein sequence ID" value="CAA58885.1"/>
    <property type="molecule type" value="Genomic_DNA"/>
</dbReference>
<dbReference type="SMR" id="Q59556"/>
<dbReference type="BindingDB" id="Q59556"/>
<dbReference type="ChEMBL" id="CHEMBL6061"/>
<dbReference type="eggNOG" id="COG0188">
    <property type="taxonomic scope" value="Bacteria"/>
</dbReference>
<dbReference type="GO" id="GO:0005694">
    <property type="term" value="C:chromosome"/>
    <property type="evidence" value="ECO:0007669"/>
    <property type="project" value="InterPro"/>
</dbReference>
<dbReference type="GO" id="GO:0005737">
    <property type="term" value="C:cytoplasm"/>
    <property type="evidence" value="ECO:0007669"/>
    <property type="project" value="UniProtKB-SubCell"/>
</dbReference>
<dbReference type="GO" id="GO:0009330">
    <property type="term" value="C:DNA topoisomerase type II (double strand cut, ATP-hydrolyzing) complex"/>
    <property type="evidence" value="ECO:0007669"/>
    <property type="project" value="TreeGrafter"/>
</dbReference>
<dbReference type="GO" id="GO:0005524">
    <property type="term" value="F:ATP binding"/>
    <property type="evidence" value="ECO:0007669"/>
    <property type="project" value="UniProtKB-UniRule"/>
</dbReference>
<dbReference type="GO" id="GO:0003677">
    <property type="term" value="F:DNA binding"/>
    <property type="evidence" value="ECO:0007669"/>
    <property type="project" value="UniProtKB-UniRule"/>
</dbReference>
<dbReference type="GO" id="GO:0034335">
    <property type="term" value="F:DNA negative supercoiling activity"/>
    <property type="evidence" value="ECO:0000314"/>
    <property type="project" value="UniProtKB"/>
</dbReference>
<dbReference type="GO" id="GO:0006265">
    <property type="term" value="P:DNA topological change"/>
    <property type="evidence" value="ECO:0007669"/>
    <property type="project" value="UniProtKB-UniRule"/>
</dbReference>
<dbReference type="GO" id="GO:0006261">
    <property type="term" value="P:DNA-templated DNA replication"/>
    <property type="evidence" value="ECO:0007669"/>
    <property type="project" value="UniProtKB-UniRule"/>
</dbReference>
<dbReference type="CDD" id="cd00187">
    <property type="entry name" value="TOP4c"/>
    <property type="match status" value="1"/>
</dbReference>
<dbReference type="FunFam" id="1.10.268.10:FF:000001">
    <property type="entry name" value="DNA gyrase subunit A"/>
    <property type="match status" value="1"/>
</dbReference>
<dbReference type="FunFam" id="2.120.10.90:FF:000001">
    <property type="entry name" value="DNA gyrase subunit A"/>
    <property type="match status" value="1"/>
</dbReference>
<dbReference type="FunFam" id="3.30.1360.40:FF:000008">
    <property type="entry name" value="DNA topoisomerase (ATP-hydrolyzing)"/>
    <property type="match status" value="1"/>
</dbReference>
<dbReference type="Gene3D" id="3.30.1360.40">
    <property type="match status" value="1"/>
</dbReference>
<dbReference type="Gene3D" id="2.120.10.90">
    <property type="entry name" value="DNA gyrase/topoisomerase IV, subunit A, C-terminal"/>
    <property type="match status" value="1"/>
</dbReference>
<dbReference type="Gene3D" id="3.90.199.10">
    <property type="entry name" value="Topoisomerase II, domain 5"/>
    <property type="match status" value="1"/>
</dbReference>
<dbReference type="Gene3D" id="1.10.268.10">
    <property type="entry name" value="Topoisomerase, domain 3"/>
    <property type="match status" value="1"/>
</dbReference>
<dbReference type="HAMAP" id="MF_01897">
    <property type="entry name" value="GyrA"/>
    <property type="match status" value="1"/>
</dbReference>
<dbReference type="InterPro" id="IPR005743">
    <property type="entry name" value="GyrA"/>
</dbReference>
<dbReference type="InterPro" id="IPR006691">
    <property type="entry name" value="GyrA/parC_rep"/>
</dbReference>
<dbReference type="InterPro" id="IPR035516">
    <property type="entry name" value="Gyrase/topoIV_suA_C"/>
</dbReference>
<dbReference type="InterPro" id="IPR013760">
    <property type="entry name" value="Topo_IIA-like_dom_sf"/>
</dbReference>
<dbReference type="InterPro" id="IPR013758">
    <property type="entry name" value="Topo_IIA_A/C_ab"/>
</dbReference>
<dbReference type="InterPro" id="IPR013757">
    <property type="entry name" value="Topo_IIA_A_a_sf"/>
</dbReference>
<dbReference type="InterPro" id="IPR002205">
    <property type="entry name" value="Topo_IIA_dom_A"/>
</dbReference>
<dbReference type="InterPro" id="IPR050220">
    <property type="entry name" value="Type_II_DNA_Topoisomerases"/>
</dbReference>
<dbReference type="NCBIfam" id="TIGR01063">
    <property type="entry name" value="gyrA"/>
    <property type="match status" value="1"/>
</dbReference>
<dbReference type="NCBIfam" id="NF004043">
    <property type="entry name" value="PRK05560.1"/>
    <property type="match status" value="1"/>
</dbReference>
<dbReference type="NCBIfam" id="NF004044">
    <property type="entry name" value="PRK05561.1"/>
    <property type="match status" value="1"/>
</dbReference>
<dbReference type="PANTHER" id="PTHR43493:SF5">
    <property type="entry name" value="DNA GYRASE SUBUNIT A, CHLOROPLASTIC_MITOCHONDRIAL"/>
    <property type="match status" value="1"/>
</dbReference>
<dbReference type="PANTHER" id="PTHR43493">
    <property type="entry name" value="DNA GYRASE/TOPOISOMERASE SUBUNIT A"/>
    <property type="match status" value="1"/>
</dbReference>
<dbReference type="Pfam" id="PF03989">
    <property type="entry name" value="DNA_gyraseA_C"/>
    <property type="match status" value="6"/>
</dbReference>
<dbReference type="Pfam" id="PF00521">
    <property type="entry name" value="DNA_topoisoIV"/>
    <property type="match status" value="1"/>
</dbReference>
<dbReference type="SMART" id="SM00434">
    <property type="entry name" value="TOP4c"/>
    <property type="match status" value="1"/>
</dbReference>
<dbReference type="SUPFAM" id="SSF101904">
    <property type="entry name" value="GyrA/ParC C-terminal domain-like"/>
    <property type="match status" value="1"/>
</dbReference>
<dbReference type="SUPFAM" id="SSF56719">
    <property type="entry name" value="Type II DNA topoisomerase"/>
    <property type="match status" value="1"/>
</dbReference>
<dbReference type="PROSITE" id="PS52040">
    <property type="entry name" value="TOPO_IIA"/>
    <property type="match status" value="1"/>
</dbReference>
<comment type="function">
    <text evidence="3 4">A type II topoisomerase that negatively supercoils closed circular double-stranded (ds) DNA in an ATP-dependent manner to modulate DNA topology and maintain chromosomes in an underwound state; also catalyzes the interconversion of other topological isomers of double-stranded DNA rings, including catenanes (PubMed:12000834, PubMed:8574396). At comparable concentrations has a stronger decatenation activity than E.coli, which is inhibited by ciprofloxacin and novobiocin (PubMed:12000834). Cleaves dsDNA at the sequence 5'-AT/GGCC-3', leaving a 4 base overhang (PubMed:12000834). Relaxes negatively supercoiled DNA in an ATP-independent manner (PubMed:12000834).</text>
</comment>
<comment type="function">
    <text evidence="1">Negative supercoiling favors strand separation, and DNA replication, transcription, recombination and repair, all of which involve strand separation. Type II topoisomerases break and join 2 DNA strands simultaneously in an ATP-dependent manner.</text>
</comment>
<comment type="catalytic activity">
    <reaction evidence="1 3">
        <text>ATP-dependent breakage, passage and rejoining of double-stranded DNA.</text>
        <dbReference type="EC" id="5.6.2.2"/>
    </reaction>
</comment>
<comment type="activity regulation">
    <text evidence="3 4">DNA supercoiling is inhibited by the coumarin antibiotic novobiocin (PubMed:8574396). Also inhibited by the fluoroquinolones ciprofloxacin and moxifloxacin (PubMed:12000834).</text>
</comment>
<comment type="subunit">
    <text evidence="1 3 5">Heterotetramer, composed of two GyrA and two GyrB chains (PubMed:12000834, PubMed:8574396). In the heterotetramer, GyrA contains the active site tyrosine that forms a transient covalent intermediate with DNA, while GyrB binds cofactors and catalyzes ATP hydrolysis.</text>
</comment>
<comment type="subcellular location">
    <subcellularLocation>
        <location evidence="1 3">Cytoplasm</location>
    </subcellularLocation>
</comment>
<comment type="miscellaneous">
    <text evidence="1">Few gyrases are as efficient as E.coli at forming negative supercoils. Not all organisms have 2 type II topoisomerases; in organisms with a single type II topoisomerase this enzyme also has to decatenate newly replicated chromosomes.</text>
</comment>
<comment type="similarity">
    <text evidence="1">Belongs to the type II topoisomerase GyrA/ParC subunit family.</text>
</comment>
<name>GYRA_MYCSM</name>
<organism>
    <name type="scientific">Mycolicibacterium smegmatis</name>
    <name type="common">Mycobacterium smegmatis</name>
    <dbReference type="NCBI Taxonomy" id="1772"/>
    <lineage>
        <taxon>Bacteria</taxon>
        <taxon>Bacillati</taxon>
        <taxon>Actinomycetota</taxon>
        <taxon>Actinomycetes</taxon>
        <taxon>Mycobacteriales</taxon>
        <taxon>Mycobacteriaceae</taxon>
        <taxon>Mycolicibacterium</taxon>
    </lineage>
</organism>
<gene>
    <name evidence="1 6" type="primary">gyrA</name>
</gene>
<sequence length="854" mass="94925">MTDTTLPPEGEAHDRIEPVDIQQEMQRSYIDYAMSVIVGRALPEVRDGLKPVHRRVLYAMYDSASSDRSHAKSARSVAETMGNYHPHGDASIYDTLVRMAQPWSLRYPLVDGQGNFGSPGNDPPAAMRYTEARLTPLAMEMLREIDEETVDFIPNYDGRVQEPTVLPSRFPNLLANGSRGIAVGMATNNPPHNLGELAEAVYWCLENYEADEEATCEAVMERVKGPDFPTSGLIVGTQGIEDTYKTGRGSIKMRGVVEIEEDSRGRTSIVITELPYQVNHDNFITSIAEQVRDGKLAGISNIEDQSSDRVGLRIVVELKRDAVAKVVLNNLYKHTQLQTSFGANMLSIVDGVPRTLRLDQLIRLYVDHQLDVIVRRTRYRLRKANERAHILRGLVKALDALDEVIALIRASQTVDIARAGLIELLDIDDIQAQAILDMQLRRLAALERQKIVDDLAKIEAEIADLEDILAKPERQRGIVRDELKEIVDKHGDARRTRIVPADGQVSDEDLIAREDVVVTITETGYAKRTKTDLYHSQKRGGKGVQGAGLKQDDMVNHFFVCSTHDWILFFTTQGRVYRAKAYELPEASRTARGQHVANLLAFQPEERIAQVIQIKSYEDAPYLVLATRNGLVKKSKLSDFDSNRSGGIVAINLREGDELVGAVLCSAEDDLLLVSANRQSIRFSATDEALRPMGRATSGVQGMRFNEDDRLLSLNVVRPDTYLLVATSGGYAKRTSIDEYSVQGRGGKGILTIQYDRKRGSLVGALIVDDDTELYAITSTGGVIRTAARQVRKAGRQTKGVRLMNLAEGDTLIAIARNGRGRGGRVDQRIRRGHRRVTRGVMETLRSRKVLGPS</sequence>
<evidence type="ECO:0000255" key="1">
    <source>
        <dbReference type="HAMAP-Rule" id="MF_01897"/>
    </source>
</evidence>
<evidence type="ECO:0000255" key="2">
    <source>
        <dbReference type="PROSITE-ProRule" id="PRU01384"/>
    </source>
</evidence>
<evidence type="ECO:0000269" key="3">
    <source>
    </source>
</evidence>
<evidence type="ECO:0000269" key="4">
    <source>
    </source>
</evidence>
<evidence type="ECO:0000305" key="5">
    <source>
    </source>
</evidence>
<evidence type="ECO:0000312" key="6">
    <source>
        <dbReference type="EMBL" id="CAA58885.1"/>
    </source>
</evidence>
<feature type="chain" id="PRO_0000435479" description="DNA gyrase subunit A">
    <location>
        <begin position="1"/>
        <end position="854"/>
    </location>
</feature>
<feature type="domain" description="Topo IIA-type catalytic" evidence="2">
    <location>
        <begin position="42"/>
        <end position="510"/>
    </location>
</feature>
<feature type="short sequence motif" description="GyrA-box" evidence="1">
    <location>
        <begin position="537"/>
        <end position="543"/>
    </location>
</feature>
<feature type="active site" description="O-(5'-phospho-DNA)-tyrosine intermediate" evidence="1">
    <location>
        <position position="129"/>
    </location>
</feature>
<accession>Q59556</accession>
<proteinExistence type="evidence at protein level"/>